<feature type="chain" id="PRO_0000080738" description="Beta-2-microglobulin">
    <location>
        <begin position="1"/>
        <end position="98"/>
    </location>
</feature>
<feature type="domain" description="Ig-like C1-type">
    <location>
        <begin position="4"/>
        <end position="92"/>
    </location>
</feature>
<feature type="disulfide bond" evidence="2">
    <location>
        <begin position="24"/>
        <end position="79"/>
    </location>
</feature>
<evidence type="ECO:0000250" key="1"/>
<evidence type="ECO:0000255" key="2">
    <source>
        <dbReference type="PROSITE-ProRule" id="PRU00114"/>
    </source>
</evidence>
<evidence type="ECO:0000305" key="3"/>
<gene>
    <name type="primary">B2M</name>
</gene>
<keyword id="KW-0903">Direct protein sequencing</keyword>
<keyword id="KW-1015">Disulfide bond</keyword>
<keyword id="KW-0391">Immunity</keyword>
<keyword id="KW-0393">Immunoglobulin domain</keyword>
<keyword id="KW-0490">MHC I</keyword>
<keyword id="KW-1185">Reference proteome</keyword>
<keyword id="KW-0964">Secreted</keyword>
<proteinExistence type="evidence at protein level"/>
<accession>P21612</accession>
<name>B2MG_MELGA</name>
<reference key="1">
    <citation type="journal article" date="1991" name="Mol. Immunol.">
        <title>Amino acid sequences and structures of chicken and turkey beta 2-microglobulin.</title>
        <authorList>
            <person name="Welinder K.G."/>
            <person name="Jespersen H.M."/>
            <person name="Walther-Rasmussen J."/>
            <person name="Skjoedt K."/>
        </authorList>
    </citation>
    <scope>PROTEIN SEQUENCE</scope>
</reference>
<organism>
    <name type="scientific">Meleagris gallopavo</name>
    <name type="common">Wild turkey</name>
    <dbReference type="NCBI Taxonomy" id="9103"/>
    <lineage>
        <taxon>Eukaryota</taxon>
        <taxon>Metazoa</taxon>
        <taxon>Chordata</taxon>
        <taxon>Craniata</taxon>
        <taxon>Vertebrata</taxon>
        <taxon>Euteleostomi</taxon>
        <taxon>Archelosauria</taxon>
        <taxon>Archosauria</taxon>
        <taxon>Dinosauria</taxon>
        <taxon>Saurischia</taxon>
        <taxon>Theropoda</taxon>
        <taxon>Coelurosauria</taxon>
        <taxon>Aves</taxon>
        <taxon>Neognathae</taxon>
        <taxon>Galloanserae</taxon>
        <taxon>Galliformes</taxon>
        <taxon>Phasianidae</taxon>
        <taxon>Meleagridinae</taxon>
        <taxon>Meleagris</taxon>
    </lineage>
</organism>
<sequence>DLTPKVQVYSRFPASAGTKNVLNCFAAGFHPPKISITLMKDGVPMEGAQYSDMSFNDDWSFQRLVYADFTPSSDAVYTCKVDHETLKEPQVYKWDPEF</sequence>
<protein>
    <recommendedName>
        <fullName>Beta-2-microglobulin</fullName>
    </recommendedName>
</protein>
<dbReference type="PIR" id="B53282">
    <property type="entry name" value="B53282"/>
</dbReference>
<dbReference type="SMR" id="P21612"/>
<dbReference type="FunCoup" id="P21612">
    <property type="interactions" value="445"/>
</dbReference>
<dbReference type="InParanoid" id="P21612"/>
<dbReference type="Proteomes" id="UP000001645">
    <property type="component" value="Unplaced"/>
</dbReference>
<dbReference type="GO" id="GO:0005576">
    <property type="term" value="C:extracellular region"/>
    <property type="evidence" value="ECO:0007669"/>
    <property type="project" value="UniProtKB-SubCell"/>
</dbReference>
<dbReference type="GO" id="GO:0042612">
    <property type="term" value="C:MHC class I protein complex"/>
    <property type="evidence" value="ECO:0007669"/>
    <property type="project" value="UniProtKB-KW"/>
</dbReference>
<dbReference type="GO" id="GO:0002474">
    <property type="term" value="P:antigen processing and presentation of peptide antigen via MHC class I"/>
    <property type="evidence" value="ECO:0007669"/>
    <property type="project" value="UniProtKB-KW"/>
</dbReference>
<dbReference type="GO" id="GO:0006955">
    <property type="term" value="P:immune response"/>
    <property type="evidence" value="ECO:0007669"/>
    <property type="project" value="InterPro"/>
</dbReference>
<dbReference type="CDD" id="cd05770">
    <property type="entry name" value="IgC1_beta2m"/>
    <property type="match status" value="1"/>
</dbReference>
<dbReference type="FunFam" id="2.60.40.10:FF:001005">
    <property type="entry name" value="Beta-2-microglobulin"/>
    <property type="match status" value="1"/>
</dbReference>
<dbReference type="Gene3D" id="2.60.40.10">
    <property type="entry name" value="Immunoglobulins"/>
    <property type="match status" value="1"/>
</dbReference>
<dbReference type="InterPro" id="IPR015707">
    <property type="entry name" value="B2Microglobulin"/>
</dbReference>
<dbReference type="InterPro" id="IPR007110">
    <property type="entry name" value="Ig-like_dom"/>
</dbReference>
<dbReference type="InterPro" id="IPR036179">
    <property type="entry name" value="Ig-like_dom_sf"/>
</dbReference>
<dbReference type="InterPro" id="IPR013783">
    <property type="entry name" value="Ig-like_fold"/>
</dbReference>
<dbReference type="InterPro" id="IPR003006">
    <property type="entry name" value="Ig/MHC_CS"/>
</dbReference>
<dbReference type="InterPro" id="IPR003597">
    <property type="entry name" value="Ig_C1-set"/>
</dbReference>
<dbReference type="InterPro" id="IPR050160">
    <property type="entry name" value="MHC/Immunoglobulin"/>
</dbReference>
<dbReference type="PANTHER" id="PTHR19944:SF62">
    <property type="entry name" value="BETA-2-MICROGLOBULIN"/>
    <property type="match status" value="1"/>
</dbReference>
<dbReference type="PANTHER" id="PTHR19944">
    <property type="entry name" value="MHC CLASS II-RELATED"/>
    <property type="match status" value="1"/>
</dbReference>
<dbReference type="Pfam" id="PF07654">
    <property type="entry name" value="C1-set"/>
    <property type="match status" value="1"/>
</dbReference>
<dbReference type="SMART" id="SM00407">
    <property type="entry name" value="IGc1"/>
    <property type="match status" value="1"/>
</dbReference>
<dbReference type="SUPFAM" id="SSF48726">
    <property type="entry name" value="Immunoglobulin"/>
    <property type="match status" value="1"/>
</dbReference>
<dbReference type="PROSITE" id="PS50835">
    <property type="entry name" value="IG_LIKE"/>
    <property type="match status" value="1"/>
</dbReference>
<dbReference type="PROSITE" id="PS00290">
    <property type="entry name" value="IG_MHC"/>
    <property type="match status" value="1"/>
</dbReference>
<comment type="function">
    <text evidence="1">Component of the class I major histocompatibility complex (MHC). Involved in the presentation of peptide antigens to the immune system (By similarity).</text>
</comment>
<comment type="subunit">
    <text evidence="1">Heterodimer of an alpha chain and a beta chain. Beta-2-microglobulin is the beta-chain of major histocompatibility complex class I molecules (By similarity).</text>
</comment>
<comment type="subcellular location">
    <subcellularLocation>
        <location evidence="1">Secreted</location>
    </subcellularLocation>
</comment>
<comment type="similarity">
    <text evidence="3">Belongs to the beta-2-microglobulin family.</text>
</comment>